<keyword id="KW-0067">ATP-binding</keyword>
<keyword id="KW-0547">Nucleotide-binding</keyword>
<keyword id="KW-1185">Reference proteome</keyword>
<sequence>MALKHYKNSDSTVFNDAKALFDLNKNILLKGPTGSGKTKLAETLSEVVDTPMHQVNCSVDLDTESLLGFKTIKTNAEGQQEIVFVDGPVIKAMKEGHILYIDEINMAKPETLPVLNGVLDYRRQITNPYTGEVIKAVPGFNVIAAINEGYVGTLPMNEALKNRFVVIHVDYIDGDILKNVIKEQSLLQDDKQIEQIIKFNEDLRTMSKQGQISEEAASIRALLDLCDLITVMPVERAIKRTIIDKLEDEREQQAIYNAVELNF</sequence>
<reference key="1">
    <citation type="book" date="2006" name="Gram positive pathogens, 2nd edition">
        <title>The Staphylococcus aureus NCTC 8325 genome.</title>
        <editorList>
            <person name="Fischetti V."/>
            <person name="Novick R."/>
            <person name="Ferretti J."/>
            <person name="Portnoy D."/>
            <person name="Rood J."/>
        </editorList>
        <authorList>
            <person name="Gillaspy A.F."/>
            <person name="Worrell V."/>
            <person name="Orvis J."/>
            <person name="Roe B.A."/>
            <person name="Dyer D.W."/>
            <person name="Iandolo J.J."/>
        </authorList>
    </citation>
    <scope>NUCLEOTIDE SEQUENCE [LARGE SCALE GENOMIC DNA]</scope>
    <source>
        <strain>NCTC 8325 / PS 47</strain>
    </source>
</reference>
<reference key="2">
    <citation type="journal article" date="2006" name="J. Bacteriol.">
        <title>Investigations into sigmaB-modulated regulatory pathways governing extracellular virulence determinant production in Staphylococcus aureus.</title>
        <authorList>
            <person name="Shaw L.N."/>
            <person name="Aish J."/>
            <person name="Davenport J.E."/>
            <person name="Brown M.C."/>
            <person name="Lithgow J.K."/>
            <person name="Simmonite K."/>
            <person name="Crossley H."/>
            <person name="Travis J."/>
            <person name="Potempa J."/>
            <person name="Foster S.J."/>
        </authorList>
    </citation>
    <scope>MUTANT STUDIES</scope>
</reference>
<proteinExistence type="inferred from homology"/>
<name>Y1413_STAA8</name>
<protein>
    <recommendedName>
        <fullName>Uncharacterized protein SAOUHSC_01413</fullName>
    </recommendedName>
</protein>
<comment type="miscellaneous">
    <text>Disruption of this gene leads to an increase in hla (alpha-hemolysin) transcription and proteases production.</text>
</comment>
<comment type="similarity">
    <text evidence="2">Belongs to the CbbQ/NirQ/NorQ/GpvN family.</text>
</comment>
<organism>
    <name type="scientific">Staphylococcus aureus (strain NCTC 8325 / PS 47)</name>
    <dbReference type="NCBI Taxonomy" id="93061"/>
    <lineage>
        <taxon>Bacteria</taxon>
        <taxon>Bacillati</taxon>
        <taxon>Bacillota</taxon>
        <taxon>Bacilli</taxon>
        <taxon>Bacillales</taxon>
        <taxon>Staphylococcaceae</taxon>
        <taxon>Staphylococcus</taxon>
    </lineage>
</organism>
<dbReference type="EMBL" id="CP000253">
    <property type="protein sequence ID" value="ABD30507.1"/>
    <property type="molecule type" value="Genomic_DNA"/>
</dbReference>
<dbReference type="RefSeq" id="WP_001185421.1">
    <property type="nucleotide sequence ID" value="NZ_LS483365.1"/>
</dbReference>
<dbReference type="RefSeq" id="YP_499940.1">
    <property type="nucleotide sequence ID" value="NC_007795.1"/>
</dbReference>
<dbReference type="SMR" id="Q2G2J8"/>
<dbReference type="STRING" id="93061.SAOUHSC_01413"/>
<dbReference type="PaxDb" id="1280-SAXN108_1428"/>
<dbReference type="GeneID" id="3920645"/>
<dbReference type="KEGG" id="sao:SAOUHSC_01413"/>
<dbReference type="PATRIC" id="fig|93061.5.peg.1293"/>
<dbReference type="eggNOG" id="COG0714">
    <property type="taxonomic scope" value="Bacteria"/>
</dbReference>
<dbReference type="HOGENOM" id="CLU_080347_0_0_9"/>
<dbReference type="OrthoDB" id="9808317at2"/>
<dbReference type="PRO" id="PR:Q2G2J8"/>
<dbReference type="Proteomes" id="UP000008816">
    <property type="component" value="Chromosome"/>
</dbReference>
<dbReference type="GO" id="GO:0005524">
    <property type="term" value="F:ATP binding"/>
    <property type="evidence" value="ECO:0007669"/>
    <property type="project" value="UniProtKB-KW"/>
</dbReference>
<dbReference type="GO" id="GO:0016887">
    <property type="term" value="F:ATP hydrolysis activity"/>
    <property type="evidence" value="ECO:0007669"/>
    <property type="project" value="InterPro"/>
</dbReference>
<dbReference type="CDD" id="cd00009">
    <property type="entry name" value="AAA"/>
    <property type="match status" value="1"/>
</dbReference>
<dbReference type="Gene3D" id="3.40.50.300">
    <property type="entry name" value="P-loop containing nucleotide triphosphate hydrolases"/>
    <property type="match status" value="1"/>
</dbReference>
<dbReference type="InterPro" id="IPR011704">
    <property type="entry name" value="ATPase_dyneun-rel_AAA"/>
</dbReference>
<dbReference type="InterPro" id="IPR050764">
    <property type="entry name" value="CbbQ/NirQ/NorQ/GpvN"/>
</dbReference>
<dbReference type="InterPro" id="IPR013615">
    <property type="entry name" value="CbbQ_C"/>
</dbReference>
<dbReference type="InterPro" id="IPR001270">
    <property type="entry name" value="ClpA/B"/>
</dbReference>
<dbReference type="InterPro" id="IPR027417">
    <property type="entry name" value="P-loop_NTPase"/>
</dbReference>
<dbReference type="PANTHER" id="PTHR42759:SF1">
    <property type="entry name" value="MAGNESIUM-CHELATASE SUBUNIT CHLD"/>
    <property type="match status" value="1"/>
</dbReference>
<dbReference type="PANTHER" id="PTHR42759">
    <property type="entry name" value="MOXR FAMILY PROTEIN"/>
    <property type="match status" value="1"/>
</dbReference>
<dbReference type="Pfam" id="PF07728">
    <property type="entry name" value="AAA_5"/>
    <property type="match status" value="1"/>
</dbReference>
<dbReference type="Pfam" id="PF08406">
    <property type="entry name" value="CbbQ_C"/>
    <property type="match status" value="1"/>
</dbReference>
<dbReference type="PRINTS" id="PR00300">
    <property type="entry name" value="CLPPROTEASEA"/>
</dbReference>
<dbReference type="SUPFAM" id="SSF52540">
    <property type="entry name" value="P-loop containing nucleoside triphosphate hydrolases"/>
    <property type="match status" value="1"/>
</dbReference>
<feature type="chain" id="PRO_0000284812" description="Uncharacterized protein SAOUHSC_01413">
    <location>
        <begin position="1"/>
        <end position="263"/>
    </location>
</feature>
<feature type="binding site" evidence="1">
    <location>
        <begin position="31"/>
        <end position="38"/>
    </location>
    <ligand>
        <name>ATP</name>
        <dbReference type="ChEBI" id="CHEBI:30616"/>
    </ligand>
</feature>
<evidence type="ECO:0000255" key="1"/>
<evidence type="ECO:0000305" key="2"/>
<accession>Q2G2J8</accession>
<gene>
    <name type="ordered locus">SAOUHSC_01413</name>
</gene>